<name>AAIP_WHEAT</name>
<proteinExistence type="evidence at transcript level"/>
<evidence type="ECO:0000255" key="1">
    <source>
        <dbReference type="PROSITE-ProRule" id="PRU00159"/>
    </source>
</evidence>
<evidence type="ECO:0000255" key="2">
    <source>
        <dbReference type="PROSITE-ProRule" id="PRU10027"/>
    </source>
</evidence>
<evidence type="ECO:0000305" key="3"/>
<accession>Q02066</accession>
<protein>
    <recommendedName>
        <fullName>Abscisic acid-inducible protein kinase</fullName>
        <ecNumber>2.7.11.1</ecNumber>
    </recommendedName>
</protein>
<dbReference type="EC" id="2.7.11.1"/>
<dbReference type="EMBL" id="M94726">
    <property type="protein sequence ID" value="AAA96325.1"/>
    <property type="molecule type" value="mRNA"/>
</dbReference>
<dbReference type="PIR" id="A46408">
    <property type="entry name" value="A46408"/>
</dbReference>
<dbReference type="SMR" id="Q02066"/>
<dbReference type="STRING" id="4565.Q02066"/>
<dbReference type="PaxDb" id="4565-Traes_2AL_2FF604DA9.2"/>
<dbReference type="eggNOG" id="KOG0583">
    <property type="taxonomic scope" value="Eukaryota"/>
</dbReference>
<dbReference type="Proteomes" id="UP000019116">
    <property type="component" value="Unplaced"/>
</dbReference>
<dbReference type="ExpressionAtlas" id="Q02066">
    <property type="expression patterns" value="baseline and differential"/>
</dbReference>
<dbReference type="GO" id="GO:0005524">
    <property type="term" value="F:ATP binding"/>
    <property type="evidence" value="ECO:0007669"/>
    <property type="project" value="UniProtKB-KW"/>
</dbReference>
<dbReference type="GO" id="GO:0106310">
    <property type="term" value="F:protein serine kinase activity"/>
    <property type="evidence" value="ECO:0007669"/>
    <property type="project" value="RHEA"/>
</dbReference>
<dbReference type="GO" id="GO:0004674">
    <property type="term" value="F:protein serine/threonine kinase activity"/>
    <property type="evidence" value="ECO:0000318"/>
    <property type="project" value="GO_Central"/>
</dbReference>
<dbReference type="CDD" id="cd14662">
    <property type="entry name" value="STKc_SnRK2"/>
    <property type="match status" value="1"/>
</dbReference>
<dbReference type="FunFam" id="1.10.510.10:FF:000085">
    <property type="entry name" value="Serine/threonine-protein kinase SRK2E"/>
    <property type="match status" value="1"/>
</dbReference>
<dbReference type="Gene3D" id="3.30.200.20">
    <property type="entry name" value="Phosphorylase Kinase, domain 1"/>
    <property type="match status" value="1"/>
</dbReference>
<dbReference type="Gene3D" id="1.10.510.10">
    <property type="entry name" value="Transferase(Phosphotransferase) domain 1"/>
    <property type="match status" value="1"/>
</dbReference>
<dbReference type="InterPro" id="IPR011009">
    <property type="entry name" value="Kinase-like_dom_sf"/>
</dbReference>
<dbReference type="InterPro" id="IPR000719">
    <property type="entry name" value="Prot_kinase_dom"/>
</dbReference>
<dbReference type="InterPro" id="IPR008271">
    <property type="entry name" value="Ser/Thr_kinase_AS"/>
</dbReference>
<dbReference type="PANTHER" id="PTHR24343">
    <property type="entry name" value="SERINE/THREONINE KINASE"/>
    <property type="match status" value="1"/>
</dbReference>
<dbReference type="PANTHER" id="PTHR24343:SF476">
    <property type="entry name" value="SERINE_THREONINE-PROTEIN KINASE SRK2C"/>
    <property type="match status" value="1"/>
</dbReference>
<dbReference type="Pfam" id="PF00069">
    <property type="entry name" value="Pkinase"/>
    <property type="match status" value="1"/>
</dbReference>
<dbReference type="SMART" id="SM00220">
    <property type="entry name" value="S_TKc"/>
    <property type="match status" value="1"/>
</dbReference>
<dbReference type="SUPFAM" id="SSF56112">
    <property type="entry name" value="Protein kinase-like (PK-like)"/>
    <property type="match status" value="1"/>
</dbReference>
<dbReference type="PROSITE" id="PS50011">
    <property type="entry name" value="PROTEIN_KINASE_DOM"/>
    <property type="match status" value="1"/>
</dbReference>
<dbReference type="PROSITE" id="PS00108">
    <property type="entry name" value="PROTEIN_KINASE_ST"/>
    <property type="match status" value="1"/>
</dbReference>
<keyword id="KW-0067">ATP-binding</keyword>
<keyword id="KW-0418">Kinase</keyword>
<keyword id="KW-0547">Nucleotide-binding</keyword>
<keyword id="KW-0597">Phosphoprotein</keyword>
<keyword id="KW-1185">Reference proteome</keyword>
<keyword id="KW-0723">Serine/threonine-protein kinase</keyword>
<keyword id="KW-0346">Stress response</keyword>
<keyword id="KW-0808">Transferase</keyword>
<comment type="function">
    <text>Involved in water-stress responses.</text>
</comment>
<comment type="catalytic activity">
    <reaction>
        <text>L-seryl-[protein] + ATP = O-phospho-L-seryl-[protein] + ADP + H(+)</text>
        <dbReference type="Rhea" id="RHEA:17989"/>
        <dbReference type="Rhea" id="RHEA-COMP:9863"/>
        <dbReference type="Rhea" id="RHEA-COMP:11604"/>
        <dbReference type="ChEBI" id="CHEBI:15378"/>
        <dbReference type="ChEBI" id="CHEBI:29999"/>
        <dbReference type="ChEBI" id="CHEBI:30616"/>
        <dbReference type="ChEBI" id="CHEBI:83421"/>
        <dbReference type="ChEBI" id="CHEBI:456216"/>
        <dbReference type="EC" id="2.7.11.1"/>
    </reaction>
</comment>
<comment type="catalytic activity">
    <reaction>
        <text>L-threonyl-[protein] + ATP = O-phospho-L-threonyl-[protein] + ADP + H(+)</text>
        <dbReference type="Rhea" id="RHEA:46608"/>
        <dbReference type="Rhea" id="RHEA-COMP:11060"/>
        <dbReference type="Rhea" id="RHEA-COMP:11605"/>
        <dbReference type="ChEBI" id="CHEBI:15378"/>
        <dbReference type="ChEBI" id="CHEBI:30013"/>
        <dbReference type="ChEBI" id="CHEBI:30616"/>
        <dbReference type="ChEBI" id="CHEBI:61977"/>
        <dbReference type="ChEBI" id="CHEBI:456216"/>
        <dbReference type="EC" id="2.7.11.1"/>
    </reaction>
</comment>
<comment type="induction">
    <text>By abscisic acid (ABA) and dehydration.</text>
</comment>
<comment type="PTM">
    <text evidence="3">Autophosphorylated.</text>
</comment>
<comment type="similarity">
    <text evidence="1">Belongs to the protein kinase superfamily. Ser/Thr protein kinase family.</text>
</comment>
<feature type="chain" id="PRO_0000085588" description="Abscisic acid-inducible protein kinase">
    <location>
        <begin position="1" status="less than"/>
        <end position="332"/>
    </location>
</feature>
<feature type="domain" description="Protein kinase" evidence="1">
    <location>
        <begin position="1" status="less than"/>
        <end position="250"/>
    </location>
</feature>
<feature type="active site" description="Proton acceptor" evidence="1 2">
    <location>
        <position position="113"/>
    </location>
</feature>
<feature type="binding site" evidence="1">
    <location>
        <begin position="1" status="less than"/>
        <end position="8"/>
    </location>
    <ligand>
        <name>ATP</name>
        <dbReference type="ChEBI" id="CHEBI:30616"/>
    </ligand>
</feature>
<feature type="binding site" evidence="1">
    <location>
        <position position="23"/>
    </location>
    <ligand>
        <name>ATP</name>
        <dbReference type="ChEBI" id="CHEBI:30616"/>
    </ligand>
</feature>
<feature type="non-terminal residue">
    <location>
        <position position="1"/>
    </location>
</feature>
<reference key="1">
    <citation type="journal article" date="1992" name="Proc. Natl. Acad. Sci. U.S.A.">
        <title>Isolation of a wheat cDNA clone for an abscisic acid-inducible transcript with homology to protein kinases.</title>
        <authorList>
            <person name="Anderberg R.J."/>
            <person name="Walker-Simmons M.K."/>
        </authorList>
    </citation>
    <scope>NUCLEOTIDE SEQUENCE [MRNA]</scope>
    <source>
        <strain>cv. Brevor</strain>
        <tissue>Seed</tissue>
    </source>
</reference>
<organism>
    <name type="scientific">Triticum aestivum</name>
    <name type="common">Wheat</name>
    <dbReference type="NCBI Taxonomy" id="4565"/>
    <lineage>
        <taxon>Eukaryota</taxon>
        <taxon>Viridiplantae</taxon>
        <taxon>Streptophyta</taxon>
        <taxon>Embryophyta</taxon>
        <taxon>Tracheophyta</taxon>
        <taxon>Spermatophyta</taxon>
        <taxon>Magnoliopsida</taxon>
        <taxon>Liliopsida</taxon>
        <taxon>Poales</taxon>
        <taxon>Poaceae</taxon>
        <taxon>BOP clade</taxon>
        <taxon>Pooideae</taxon>
        <taxon>Triticodae</taxon>
        <taxon>Triticeae</taxon>
        <taxon>Triticinae</taxon>
        <taxon>Triticum</taxon>
    </lineage>
</organism>
<sequence>GSGNFGVAKLVRDVRTKEHFAVKFIERGHKIDEHVQREIMNHRSLKHPNIIRFKEVVLTPTHLAIVMEYASGGELFQRICNAGRFSEDEGRFFFQQLISGVSYCHSMQVCHRDLKLENTLLDGSVAPRLKICDFGYSKSSVLHSQPKSTVGTPAYIAPEVLSRREYDGKVADVWSCGVTLYVMLVGAYPFEDPDEPRNFRKTITRILSVQYSVPDYVRVSMDCIHLLSRIFVGNPQQRITIPEIKNHPWFLKRLPVEMTDEYQRSMQLADMNTPSQSLEEAMAIIQEAQKPGDNALGVAGQVACLGSMDLDDIDFDIDDIDVESSGDFVCPL</sequence>